<sequence>MNPFRILGDLSHLTSILILIHNIKTTRYIEGISFKTQTLYALVFITRYLDLLTFHWVSLYNALMKIFFIVSTAYIVVLLQGSKRTNTIAYNEMLMHDTFKIQHLLIGSALMSVFFHHKFTFLELAWSFSVWLESVAILPQLYMLSKGGKTRSLTVHYIFAMGLYRALYIPNWIWRYSTEDKKLDKIAFFAGLLQTLLYSDFFYIYYTKVIRGKGFKLPK</sequence>
<evidence type="ECO:0000255" key="1"/>
<evidence type="ECO:0000269" key="2">
    <source>
    </source>
</evidence>
<evidence type="ECO:0000269" key="3">
    <source>
    </source>
</evidence>
<evidence type="ECO:0000269" key="4">
    <source>
    </source>
</evidence>
<evidence type="ECO:0000303" key="5">
    <source>
    </source>
</evidence>
<evidence type="ECO:0000303" key="6">
    <source>
    </source>
</evidence>
<evidence type="ECO:0000305" key="7"/>
<evidence type="ECO:0000312" key="8">
    <source>
        <dbReference type="SGD" id="S000000136"/>
    </source>
</evidence>
<comment type="function">
    <text evidence="2 3 4">Required for the retention of luminal endoplasmic reticulum proteins. Determines the specificity of the luminal ER protein retention system. Also required for normal vesicular traffic through the Golgi. This receptor strongly recognizes H-D-E-L and weakly recognizes D-D-E-L and K-D-E-L.</text>
</comment>
<comment type="subcellular location">
    <subcellularLocation>
        <location evidence="2">Endoplasmic reticulum membrane</location>
        <topology evidence="1">Multi-pass membrane protein</topology>
    </subcellularLocation>
</comment>
<comment type="similarity">
    <text evidence="7">Belongs to the ERD2 family.</text>
</comment>
<comment type="sequence caution" evidence="7">
    <conflict type="erroneous initiation">
        <sequence resource="EMBL-CDS" id="CAA55054"/>
    </conflict>
</comment>
<name>ERD2_YEAST</name>
<reference key="1">
    <citation type="journal article" date="1990" name="Cell">
        <title>ERD2, a yeast gene required for the receptor-mediated retrieval of luminal ER proteins from the secretory pathway.</title>
        <authorList>
            <person name="Semenza J.C."/>
            <person name="Hardwick K.G."/>
            <person name="Dean N."/>
            <person name="Pelham H.R.B."/>
        </authorList>
    </citation>
    <scope>NUCLEOTIDE SEQUENCE [GENOMIC DNA]</scope>
    <scope>FUNCTION</scope>
    <scope>SUBCELLULAR LOCATION</scope>
    <source>
        <strain>SEY2102</strain>
    </source>
</reference>
<reference key="2">
    <citation type="journal article" date="1994" name="Yeast">
        <title>The sequence of a 22.4 kb DNA fragment from the left arm of yeast chromosome II reveals homologues to bacterial proline synthetase and murine alpha-adaptin, as well as a new permease and a DNA-binding protein.</title>
        <authorList>
            <person name="de Wergifosse P."/>
            <person name="Jacques B."/>
            <person name="Jonniaux J.-L."/>
            <person name="Purnelle B."/>
            <person name="Skala J."/>
            <person name="Goffeau A."/>
        </authorList>
    </citation>
    <scope>NUCLEOTIDE SEQUENCE [GENOMIC DNA]</scope>
    <source>
        <strain>ATCC 204508 / S288c</strain>
    </source>
</reference>
<reference key="3">
    <citation type="journal article" date="1994" name="EMBO J.">
        <title>Complete DNA sequence of yeast chromosome II.</title>
        <authorList>
            <person name="Feldmann H."/>
            <person name="Aigle M."/>
            <person name="Aljinovic G."/>
            <person name="Andre B."/>
            <person name="Baclet M.C."/>
            <person name="Barthe C."/>
            <person name="Baur A."/>
            <person name="Becam A.-M."/>
            <person name="Biteau N."/>
            <person name="Boles E."/>
            <person name="Brandt T."/>
            <person name="Brendel M."/>
            <person name="Brueckner M."/>
            <person name="Bussereau F."/>
            <person name="Christiansen C."/>
            <person name="Contreras R."/>
            <person name="Crouzet M."/>
            <person name="Cziepluch C."/>
            <person name="Demolis N."/>
            <person name="Delaveau T."/>
            <person name="Doignon F."/>
            <person name="Domdey H."/>
            <person name="Duesterhus S."/>
            <person name="Dubois E."/>
            <person name="Dujon B."/>
            <person name="El Bakkoury M."/>
            <person name="Entian K.-D."/>
            <person name="Feuermann M."/>
            <person name="Fiers W."/>
            <person name="Fobo G.M."/>
            <person name="Fritz C."/>
            <person name="Gassenhuber J."/>
            <person name="Glansdorff N."/>
            <person name="Goffeau A."/>
            <person name="Grivell L.A."/>
            <person name="de Haan M."/>
            <person name="Hein C."/>
            <person name="Herbert C.J."/>
            <person name="Hollenberg C.P."/>
            <person name="Holmstroem K."/>
            <person name="Jacq C."/>
            <person name="Jacquet M."/>
            <person name="Jauniaux J.-C."/>
            <person name="Jonniaux J.-L."/>
            <person name="Kallesoee T."/>
            <person name="Kiesau P."/>
            <person name="Kirchrath L."/>
            <person name="Koetter P."/>
            <person name="Korol S."/>
            <person name="Liebl S."/>
            <person name="Logghe M."/>
            <person name="Lohan A.J.E."/>
            <person name="Louis E.J."/>
            <person name="Li Z.Y."/>
            <person name="Maat M.J."/>
            <person name="Mallet L."/>
            <person name="Mannhaupt G."/>
            <person name="Messenguy F."/>
            <person name="Miosga T."/>
            <person name="Molemans F."/>
            <person name="Mueller S."/>
            <person name="Nasr F."/>
            <person name="Obermaier B."/>
            <person name="Perea J."/>
            <person name="Pierard A."/>
            <person name="Piravandi E."/>
            <person name="Pohl F.M."/>
            <person name="Pohl T.M."/>
            <person name="Potier S."/>
            <person name="Proft M."/>
            <person name="Purnelle B."/>
            <person name="Ramezani Rad M."/>
            <person name="Rieger M."/>
            <person name="Rose M."/>
            <person name="Schaaff-Gerstenschlaeger I."/>
            <person name="Scherens B."/>
            <person name="Schwarzlose C."/>
            <person name="Skala J."/>
            <person name="Slonimski P.P."/>
            <person name="Smits P.H.M."/>
            <person name="Souciet J.-L."/>
            <person name="Steensma H.Y."/>
            <person name="Stucka R."/>
            <person name="Urrestarazu L.A."/>
            <person name="van der Aart Q.J.M."/>
            <person name="Van Dyck L."/>
            <person name="Vassarotti A."/>
            <person name="Vetter I."/>
            <person name="Vierendeels F."/>
            <person name="Vissers S."/>
            <person name="Wagner G."/>
            <person name="de Wergifosse P."/>
            <person name="Wolfe K.H."/>
            <person name="Zagulski M."/>
            <person name="Zimmermann F.K."/>
            <person name="Mewes H.-W."/>
            <person name="Kleine K."/>
        </authorList>
    </citation>
    <scope>NUCLEOTIDE SEQUENCE [LARGE SCALE GENOMIC DNA]</scope>
    <source>
        <strain>ATCC 204508 / S288c</strain>
    </source>
</reference>
<reference key="4">
    <citation type="journal article" date="2014" name="G3 (Bethesda)">
        <title>The reference genome sequence of Saccharomyces cerevisiae: Then and now.</title>
        <authorList>
            <person name="Engel S.R."/>
            <person name="Dietrich F.S."/>
            <person name="Fisk D.G."/>
            <person name="Binkley G."/>
            <person name="Balakrishnan R."/>
            <person name="Costanzo M.C."/>
            <person name="Dwight S.S."/>
            <person name="Hitz B.C."/>
            <person name="Karra K."/>
            <person name="Nash R.S."/>
            <person name="Weng S."/>
            <person name="Wong E.D."/>
            <person name="Lloyd P."/>
            <person name="Skrzypek M.S."/>
            <person name="Miyasato S.R."/>
            <person name="Simison M."/>
            <person name="Cherry J.M."/>
        </authorList>
    </citation>
    <scope>GENOME REANNOTATION</scope>
    <source>
        <strain>ATCC 204508 / S288c</strain>
    </source>
</reference>
<reference key="5">
    <citation type="journal article" date="1990" name="Cell">
        <title>The ERD2 gene determines the specificity of the luminal ER protein retention system.</title>
        <authorList>
            <person name="Lewis M.J."/>
            <person name="Sweet D.J."/>
            <person name="Pelham H.R.B."/>
        </authorList>
    </citation>
    <scope>FUNCTION</scope>
</reference>
<reference key="6">
    <citation type="journal article" date="1990" name="EMBO J.">
        <title>ERD1, a yeast gene required for the retention of luminal endoplasmic reticulum proteins, affects glycoprotein processing in the Golgi apparatus.</title>
        <authorList>
            <person name="Hardwick K."/>
            <person name="Lewis M."/>
            <person name="Semenza J."/>
            <person name="Dean N."/>
            <person name="Pelham H."/>
        </authorList>
    </citation>
    <scope>FUNCTION</scope>
</reference>
<reference key="7">
    <citation type="journal article" date="2018" name="J. Proteome Res.">
        <title>Enrichment-based proteogenomics identifies microproteins, missing proteins, and novel smORFs in Saccharomyces cerevisiae.</title>
        <authorList>
            <person name="He C."/>
            <person name="Jia C."/>
            <person name="Zhang Y."/>
            <person name="Xu P."/>
        </authorList>
    </citation>
    <scope>IDENTIFICATION BY MASS SPECTROMETRY</scope>
</reference>
<feature type="chain" id="PRO_0000194171" description="ER lumen protein-retaining receptor">
    <location>
        <begin position="1"/>
        <end position="219"/>
    </location>
</feature>
<feature type="topological domain" description="Lumenal" evidence="7">
    <location>
        <begin position="1"/>
        <end position="5"/>
    </location>
</feature>
<feature type="transmembrane region" description="Helical" evidence="1">
    <location>
        <begin position="6"/>
        <end position="26"/>
    </location>
</feature>
<feature type="topological domain" description="Cytoplasmic" evidence="7">
    <location>
        <begin position="27"/>
        <end position="37"/>
    </location>
</feature>
<feature type="transmembrane region" description="Helical" evidence="1">
    <location>
        <begin position="38"/>
        <end position="58"/>
    </location>
</feature>
<feature type="transmembrane region" description="Helical" evidence="1">
    <location>
        <begin position="59"/>
        <end position="79"/>
    </location>
</feature>
<feature type="topological domain" description="Cytoplasmic" evidence="7">
    <location>
        <begin position="80"/>
        <end position="98"/>
    </location>
</feature>
<feature type="transmembrane region" description="Helical" evidence="1">
    <location>
        <begin position="99"/>
        <end position="116"/>
    </location>
</feature>
<feature type="topological domain" description="Lumenal" evidence="7">
    <location>
        <begin position="117"/>
        <end position="118"/>
    </location>
</feature>
<feature type="transmembrane region" description="Helical" evidence="1">
    <location>
        <begin position="119"/>
        <end position="139"/>
    </location>
</feature>
<feature type="topological domain" description="Cytoplasmic" evidence="7">
    <location>
        <begin position="140"/>
        <end position="152"/>
    </location>
</feature>
<feature type="transmembrane region" description="Helical" evidence="1">
    <location>
        <begin position="153"/>
        <end position="173"/>
    </location>
</feature>
<feature type="topological domain" description="Lumenal" evidence="7">
    <location>
        <begin position="174"/>
        <end position="185"/>
    </location>
</feature>
<feature type="transmembrane region" description="Helical" evidence="1">
    <location>
        <begin position="186"/>
        <end position="206"/>
    </location>
</feature>
<feature type="topological domain" description="Cytoplasmic" evidence="7">
    <location>
        <begin position="207"/>
        <end position="219"/>
    </location>
</feature>
<gene>
    <name evidence="5 6" type="primary">ERD2</name>
    <name evidence="8" type="ordered locus">YBL040C</name>
    <name type="ORF">YBL0408</name>
</gene>
<keyword id="KW-0256">Endoplasmic reticulum</keyword>
<keyword id="KW-0931">ER-Golgi transport</keyword>
<keyword id="KW-0472">Membrane</keyword>
<keyword id="KW-0653">Protein transport</keyword>
<keyword id="KW-0675">Receptor</keyword>
<keyword id="KW-1185">Reference proteome</keyword>
<keyword id="KW-0812">Transmembrane</keyword>
<keyword id="KW-1133">Transmembrane helix</keyword>
<keyword id="KW-0813">Transport</keyword>
<protein>
    <recommendedName>
        <fullName evidence="7">ER lumen protein-retaining receptor</fullName>
    </recommendedName>
    <alternativeName>
        <fullName evidence="5">Endoplasmic reticulum retention defective protein 2</fullName>
    </alternativeName>
    <alternativeName>
        <fullName>HDEL receptor</fullName>
    </alternativeName>
</protein>
<organism>
    <name type="scientific">Saccharomyces cerevisiae (strain ATCC 204508 / S288c)</name>
    <name type="common">Baker's yeast</name>
    <dbReference type="NCBI Taxonomy" id="559292"/>
    <lineage>
        <taxon>Eukaryota</taxon>
        <taxon>Fungi</taxon>
        <taxon>Dikarya</taxon>
        <taxon>Ascomycota</taxon>
        <taxon>Saccharomycotina</taxon>
        <taxon>Saccharomycetes</taxon>
        <taxon>Saccharomycetales</taxon>
        <taxon>Saccharomycetaceae</taxon>
        <taxon>Saccharomyces</taxon>
    </lineage>
</organism>
<accession>P18414</accession>
<accession>D6VPV8</accession>
<dbReference type="EMBL" id="M34777">
    <property type="protein sequence ID" value="AAA68907.1"/>
    <property type="molecule type" value="Genomic_DNA"/>
</dbReference>
<dbReference type="EMBL" id="X78214">
    <property type="protein sequence ID" value="CAA55054.1"/>
    <property type="status" value="ALT_INIT"/>
    <property type="molecule type" value="Genomic_DNA"/>
</dbReference>
<dbReference type="EMBL" id="Z35801">
    <property type="protein sequence ID" value="CAA84860.1"/>
    <property type="molecule type" value="Genomic_DNA"/>
</dbReference>
<dbReference type="EMBL" id="BK006936">
    <property type="protein sequence ID" value="DAA07078.1"/>
    <property type="molecule type" value="Genomic_DNA"/>
</dbReference>
<dbReference type="PIR" id="A35617">
    <property type="entry name" value="A35617"/>
</dbReference>
<dbReference type="RefSeq" id="NP_009513.1">
    <property type="nucleotide sequence ID" value="NM_001178280.1"/>
</dbReference>
<dbReference type="SMR" id="P18414"/>
<dbReference type="BioGRID" id="32657">
    <property type="interactions" value="147"/>
</dbReference>
<dbReference type="DIP" id="DIP-7718N"/>
<dbReference type="FunCoup" id="P18414">
    <property type="interactions" value="446"/>
</dbReference>
<dbReference type="IntAct" id="P18414">
    <property type="interactions" value="58"/>
</dbReference>
<dbReference type="MINT" id="P18414"/>
<dbReference type="STRING" id="4932.YBL040C"/>
<dbReference type="PaxDb" id="4932-YBL040C"/>
<dbReference type="PeptideAtlas" id="P18414"/>
<dbReference type="EnsemblFungi" id="YBL040C_mRNA">
    <property type="protein sequence ID" value="YBL040C"/>
    <property type="gene ID" value="YBL040C"/>
</dbReference>
<dbReference type="GeneID" id="852240"/>
<dbReference type="KEGG" id="sce:YBL040C"/>
<dbReference type="AGR" id="SGD:S000000136"/>
<dbReference type="SGD" id="S000000136">
    <property type="gene designation" value="ERD2"/>
</dbReference>
<dbReference type="VEuPathDB" id="FungiDB:YBL040C"/>
<dbReference type="eggNOG" id="KOG3106">
    <property type="taxonomic scope" value="Eukaryota"/>
</dbReference>
<dbReference type="GeneTree" id="ENSGT00390000004010"/>
<dbReference type="HOGENOM" id="CLU_057784_0_0_1"/>
<dbReference type="InParanoid" id="P18414"/>
<dbReference type="OMA" id="WKSRSCE"/>
<dbReference type="OrthoDB" id="7694678at2759"/>
<dbReference type="BioCyc" id="YEAST:G3O-28941-MONOMER"/>
<dbReference type="Reactome" id="R-SCE-6807878">
    <property type="pathway name" value="COPI-mediated anterograde transport"/>
</dbReference>
<dbReference type="Reactome" id="R-SCE-6811434">
    <property type="pathway name" value="COPI-dependent Golgi-to-ER retrograde traffic"/>
</dbReference>
<dbReference type="BioGRID-ORCS" id="852240">
    <property type="hits" value="0 hits in 10 CRISPR screens"/>
</dbReference>
<dbReference type="PRO" id="PR:P18414"/>
<dbReference type="Proteomes" id="UP000002311">
    <property type="component" value="Chromosome II"/>
</dbReference>
<dbReference type="RNAct" id="P18414">
    <property type="molecule type" value="protein"/>
</dbReference>
<dbReference type="GO" id="GO:0005801">
    <property type="term" value="C:cis-Golgi network"/>
    <property type="evidence" value="ECO:0000318"/>
    <property type="project" value="GO_Central"/>
</dbReference>
<dbReference type="GO" id="GO:0005783">
    <property type="term" value="C:endoplasmic reticulum"/>
    <property type="evidence" value="ECO:0000318"/>
    <property type="project" value="GO_Central"/>
</dbReference>
<dbReference type="GO" id="GO:0005789">
    <property type="term" value="C:endoplasmic reticulum membrane"/>
    <property type="evidence" value="ECO:0000314"/>
    <property type="project" value="SGD"/>
</dbReference>
<dbReference type="GO" id="GO:0046923">
    <property type="term" value="F:ER retention sequence binding"/>
    <property type="evidence" value="ECO:0000318"/>
    <property type="project" value="GO_Central"/>
</dbReference>
<dbReference type="GO" id="GO:0045015">
    <property type="term" value="F:HDEL sequence binding"/>
    <property type="evidence" value="ECO:0000315"/>
    <property type="project" value="SGD"/>
</dbReference>
<dbReference type="GO" id="GO:0006621">
    <property type="term" value="P:protein retention in ER lumen"/>
    <property type="evidence" value="ECO:0000318"/>
    <property type="project" value="GO_Central"/>
</dbReference>
<dbReference type="GO" id="GO:0015031">
    <property type="term" value="P:protein transport"/>
    <property type="evidence" value="ECO:0007669"/>
    <property type="project" value="UniProtKB-KW"/>
</dbReference>
<dbReference type="GO" id="GO:0006890">
    <property type="term" value="P:retrograde vesicle-mediated transport, Golgi to endoplasmic reticulum"/>
    <property type="evidence" value="ECO:0000315"/>
    <property type="project" value="SGD"/>
</dbReference>
<dbReference type="InterPro" id="IPR000133">
    <property type="entry name" value="ER_ret_rcpt"/>
</dbReference>
<dbReference type="PANTHER" id="PTHR10585">
    <property type="entry name" value="ER LUMEN PROTEIN RETAINING RECEPTOR"/>
    <property type="match status" value="1"/>
</dbReference>
<dbReference type="Pfam" id="PF00810">
    <property type="entry name" value="ER_lumen_recept"/>
    <property type="match status" value="1"/>
</dbReference>
<dbReference type="PRINTS" id="PR00660">
    <property type="entry name" value="ERLUMENR"/>
</dbReference>
<dbReference type="PROSITE" id="PS00951">
    <property type="entry name" value="ER_LUMEN_RECEPTOR_1"/>
    <property type="match status" value="1"/>
</dbReference>
<dbReference type="PROSITE" id="PS00952">
    <property type="entry name" value="ER_LUMEN_RECEPTOR_2"/>
    <property type="match status" value="1"/>
</dbReference>
<proteinExistence type="evidence at protein level"/>